<comment type="similarity">
    <text evidence="1">Belongs to the UPF0235 family.</text>
</comment>
<protein>
    <recommendedName>
        <fullName evidence="1">UPF0235 protein YggU</fullName>
    </recommendedName>
</protein>
<proteinExistence type="inferred from homology"/>
<feature type="chain" id="PRO_1000130706" description="UPF0235 protein YggU">
    <location>
        <begin position="1"/>
        <end position="96"/>
    </location>
</feature>
<organism>
    <name type="scientific">Salmonella agona (strain SL483)</name>
    <dbReference type="NCBI Taxonomy" id="454166"/>
    <lineage>
        <taxon>Bacteria</taxon>
        <taxon>Pseudomonadati</taxon>
        <taxon>Pseudomonadota</taxon>
        <taxon>Gammaproteobacteria</taxon>
        <taxon>Enterobacterales</taxon>
        <taxon>Enterobacteriaceae</taxon>
        <taxon>Salmonella</taxon>
    </lineage>
</organism>
<gene>
    <name evidence="1" type="primary">yggU</name>
    <name type="ordered locus">SeAg_B3265</name>
</gene>
<sequence>MSAVTRCEDGLVLRLYIQPKASRDSIVGLHGDEVKVAITAPPVDGQANSHLIKFLGKQFRVAKSQIVIEKGELGRHKQVKIIHPQQIPPEITALTE</sequence>
<accession>B5F5M7</accession>
<dbReference type="EMBL" id="CP001138">
    <property type="protein sequence ID" value="ACH50195.1"/>
    <property type="molecule type" value="Genomic_DNA"/>
</dbReference>
<dbReference type="RefSeq" id="WP_001277204.1">
    <property type="nucleotide sequence ID" value="NC_011149.1"/>
</dbReference>
<dbReference type="SMR" id="B5F5M7"/>
<dbReference type="KEGG" id="sea:SeAg_B3265"/>
<dbReference type="HOGENOM" id="CLU_130694_5_0_6"/>
<dbReference type="Proteomes" id="UP000008819">
    <property type="component" value="Chromosome"/>
</dbReference>
<dbReference type="GO" id="GO:0005737">
    <property type="term" value="C:cytoplasm"/>
    <property type="evidence" value="ECO:0007669"/>
    <property type="project" value="TreeGrafter"/>
</dbReference>
<dbReference type="Gene3D" id="3.30.1200.10">
    <property type="entry name" value="YggU-like"/>
    <property type="match status" value="1"/>
</dbReference>
<dbReference type="HAMAP" id="MF_00634">
    <property type="entry name" value="UPF0235"/>
    <property type="match status" value="1"/>
</dbReference>
<dbReference type="InterPro" id="IPR003746">
    <property type="entry name" value="DUF167"/>
</dbReference>
<dbReference type="InterPro" id="IPR036591">
    <property type="entry name" value="YggU-like_sf"/>
</dbReference>
<dbReference type="NCBIfam" id="TIGR00251">
    <property type="entry name" value="DUF167 family protein"/>
    <property type="match status" value="1"/>
</dbReference>
<dbReference type="NCBIfam" id="NF003466">
    <property type="entry name" value="PRK05090.1"/>
    <property type="match status" value="1"/>
</dbReference>
<dbReference type="PANTHER" id="PTHR13420">
    <property type="entry name" value="UPF0235 PROTEIN C15ORF40"/>
    <property type="match status" value="1"/>
</dbReference>
<dbReference type="PANTHER" id="PTHR13420:SF7">
    <property type="entry name" value="UPF0235 PROTEIN C15ORF40"/>
    <property type="match status" value="1"/>
</dbReference>
<dbReference type="Pfam" id="PF02594">
    <property type="entry name" value="DUF167"/>
    <property type="match status" value="1"/>
</dbReference>
<dbReference type="SMART" id="SM01152">
    <property type="entry name" value="DUF167"/>
    <property type="match status" value="1"/>
</dbReference>
<dbReference type="SUPFAM" id="SSF69786">
    <property type="entry name" value="YggU-like"/>
    <property type="match status" value="1"/>
</dbReference>
<reference key="1">
    <citation type="journal article" date="2011" name="J. Bacteriol.">
        <title>Comparative genomics of 28 Salmonella enterica isolates: evidence for CRISPR-mediated adaptive sublineage evolution.</title>
        <authorList>
            <person name="Fricke W.F."/>
            <person name="Mammel M.K."/>
            <person name="McDermott P.F."/>
            <person name="Tartera C."/>
            <person name="White D.G."/>
            <person name="Leclerc J.E."/>
            <person name="Ravel J."/>
            <person name="Cebula T.A."/>
        </authorList>
    </citation>
    <scope>NUCLEOTIDE SEQUENCE [LARGE SCALE GENOMIC DNA]</scope>
    <source>
        <strain>SL483</strain>
    </source>
</reference>
<name>YGGU_SALA4</name>
<evidence type="ECO:0000255" key="1">
    <source>
        <dbReference type="HAMAP-Rule" id="MF_00634"/>
    </source>
</evidence>